<accession>A5GA17</accession>
<protein>
    <recommendedName>
        <fullName evidence="1">UDP-3-O-acyl-N-acetylglucosamine deacetylase</fullName>
        <shortName evidence="1">UDP-3-O-acyl-GlcNAc deacetylase</shortName>
        <ecNumber evidence="1">3.5.1.108</ecNumber>
    </recommendedName>
    <alternativeName>
        <fullName evidence="1">UDP-3-O-[R-3-hydroxymyristoyl]-N-acetylglucosamine deacetylase</fullName>
    </alternativeName>
</protein>
<feature type="chain" id="PRO_1000080219" description="UDP-3-O-acyl-N-acetylglucosamine deacetylase">
    <location>
        <begin position="1"/>
        <end position="307"/>
    </location>
</feature>
<feature type="active site" description="Proton donor" evidence="1">
    <location>
        <position position="262"/>
    </location>
</feature>
<feature type="binding site" evidence="1">
    <location>
        <position position="78"/>
    </location>
    <ligand>
        <name>Zn(2+)</name>
        <dbReference type="ChEBI" id="CHEBI:29105"/>
    </ligand>
</feature>
<feature type="binding site" evidence="1">
    <location>
        <position position="235"/>
    </location>
    <ligand>
        <name>Zn(2+)</name>
        <dbReference type="ChEBI" id="CHEBI:29105"/>
    </ligand>
</feature>
<feature type="binding site" evidence="1">
    <location>
        <position position="239"/>
    </location>
    <ligand>
        <name>Zn(2+)</name>
        <dbReference type="ChEBI" id="CHEBI:29105"/>
    </ligand>
</feature>
<reference key="1">
    <citation type="submission" date="2007-05" db="EMBL/GenBank/DDBJ databases">
        <title>Complete sequence of Geobacter uraniireducens Rf4.</title>
        <authorList>
            <consortium name="US DOE Joint Genome Institute"/>
            <person name="Copeland A."/>
            <person name="Lucas S."/>
            <person name="Lapidus A."/>
            <person name="Barry K."/>
            <person name="Detter J.C."/>
            <person name="Glavina del Rio T."/>
            <person name="Hammon N."/>
            <person name="Israni S."/>
            <person name="Dalin E."/>
            <person name="Tice H."/>
            <person name="Pitluck S."/>
            <person name="Chertkov O."/>
            <person name="Brettin T."/>
            <person name="Bruce D."/>
            <person name="Han C."/>
            <person name="Schmutz J."/>
            <person name="Larimer F."/>
            <person name="Land M."/>
            <person name="Hauser L."/>
            <person name="Kyrpides N."/>
            <person name="Mikhailova N."/>
            <person name="Shelobolina E."/>
            <person name="Aklujkar M."/>
            <person name="Lovley D."/>
            <person name="Richardson P."/>
        </authorList>
    </citation>
    <scope>NUCLEOTIDE SEQUENCE [LARGE SCALE GENOMIC DNA]</scope>
    <source>
        <strain>ATCC BAA-1134 / JCM 13001 / Rf4</strain>
    </source>
</reference>
<name>LPXC_GEOUR</name>
<keyword id="KW-0378">Hydrolase</keyword>
<keyword id="KW-0441">Lipid A biosynthesis</keyword>
<keyword id="KW-0444">Lipid biosynthesis</keyword>
<keyword id="KW-0443">Lipid metabolism</keyword>
<keyword id="KW-0479">Metal-binding</keyword>
<keyword id="KW-1185">Reference proteome</keyword>
<keyword id="KW-0862">Zinc</keyword>
<gene>
    <name evidence="1" type="primary">lpxC</name>
    <name type="ordered locus">Gura_1387</name>
</gene>
<proteinExistence type="inferred from homology"/>
<organism>
    <name type="scientific">Geotalea uraniireducens (strain Rf4)</name>
    <name type="common">Geobacter uraniireducens</name>
    <dbReference type="NCBI Taxonomy" id="351605"/>
    <lineage>
        <taxon>Bacteria</taxon>
        <taxon>Pseudomonadati</taxon>
        <taxon>Thermodesulfobacteriota</taxon>
        <taxon>Desulfuromonadia</taxon>
        <taxon>Geobacterales</taxon>
        <taxon>Geobacteraceae</taxon>
        <taxon>Geotalea</taxon>
    </lineage>
</organism>
<comment type="function">
    <text evidence="1">Catalyzes the hydrolysis of UDP-3-O-myristoyl-N-acetylglucosamine to form UDP-3-O-myristoylglucosamine and acetate, the committed step in lipid A biosynthesis.</text>
</comment>
<comment type="catalytic activity">
    <reaction evidence="1">
        <text>a UDP-3-O-[(3R)-3-hydroxyacyl]-N-acetyl-alpha-D-glucosamine + H2O = a UDP-3-O-[(3R)-3-hydroxyacyl]-alpha-D-glucosamine + acetate</text>
        <dbReference type="Rhea" id="RHEA:67816"/>
        <dbReference type="ChEBI" id="CHEBI:15377"/>
        <dbReference type="ChEBI" id="CHEBI:30089"/>
        <dbReference type="ChEBI" id="CHEBI:137740"/>
        <dbReference type="ChEBI" id="CHEBI:173225"/>
        <dbReference type="EC" id="3.5.1.108"/>
    </reaction>
</comment>
<comment type="cofactor">
    <cofactor evidence="1">
        <name>Zn(2+)</name>
        <dbReference type="ChEBI" id="CHEBI:29105"/>
    </cofactor>
</comment>
<comment type="pathway">
    <text evidence="1">Glycolipid biosynthesis; lipid IV(A) biosynthesis; lipid IV(A) from (3R)-3-hydroxytetradecanoyl-[acyl-carrier-protein] and UDP-N-acetyl-alpha-D-glucosamine: step 2/6.</text>
</comment>
<comment type="similarity">
    <text evidence="1">Belongs to the LpxC family.</text>
</comment>
<sequence length="307" mass="33617">MAFQQTLKNKVAFSGIGLHSGKEITLTLRPADAGNGIVFHRIDTTPPVSIEARTENVVSTRLSTTIGKNGAAVSTIEHLMAALFSCGIDNAHVDINGPEVPIMDGSAAPFVEGIRNAGSKSLSKSRKYLVVKKPVTIRDGDKRITVLPSRYYRISFDMHFNHPVINRQFRTMKFDRESFADDFSPARTFGFLAEIEALMAHGLALGASLENAVGIDDNGIVNPEGLRFTDEFVRHKILDSIGDFALAGVHLVGHVKACKSGHELNHKFITELLSRSDCWSLMELTPPENKTASFPISLPEMAWLEAC</sequence>
<evidence type="ECO:0000255" key="1">
    <source>
        <dbReference type="HAMAP-Rule" id="MF_00388"/>
    </source>
</evidence>
<dbReference type="EC" id="3.5.1.108" evidence="1"/>
<dbReference type="EMBL" id="CP000698">
    <property type="protein sequence ID" value="ABQ25588.1"/>
    <property type="molecule type" value="Genomic_DNA"/>
</dbReference>
<dbReference type="RefSeq" id="WP_011938304.1">
    <property type="nucleotide sequence ID" value="NC_009483.1"/>
</dbReference>
<dbReference type="SMR" id="A5GA17"/>
<dbReference type="STRING" id="351605.Gura_1387"/>
<dbReference type="KEGG" id="gur:Gura_1387"/>
<dbReference type="HOGENOM" id="CLU_046528_1_0_7"/>
<dbReference type="OrthoDB" id="9802746at2"/>
<dbReference type="UniPathway" id="UPA00359">
    <property type="reaction ID" value="UER00478"/>
</dbReference>
<dbReference type="Proteomes" id="UP000006695">
    <property type="component" value="Chromosome"/>
</dbReference>
<dbReference type="GO" id="GO:0016020">
    <property type="term" value="C:membrane"/>
    <property type="evidence" value="ECO:0007669"/>
    <property type="project" value="GOC"/>
</dbReference>
<dbReference type="GO" id="GO:0046872">
    <property type="term" value="F:metal ion binding"/>
    <property type="evidence" value="ECO:0007669"/>
    <property type="project" value="UniProtKB-KW"/>
</dbReference>
<dbReference type="GO" id="GO:0103117">
    <property type="term" value="F:UDP-3-O-acyl-N-acetylglucosamine deacetylase activity"/>
    <property type="evidence" value="ECO:0007669"/>
    <property type="project" value="UniProtKB-UniRule"/>
</dbReference>
<dbReference type="GO" id="GO:0009245">
    <property type="term" value="P:lipid A biosynthetic process"/>
    <property type="evidence" value="ECO:0007669"/>
    <property type="project" value="UniProtKB-UniRule"/>
</dbReference>
<dbReference type="Gene3D" id="3.30.230.20">
    <property type="entry name" value="lpxc deacetylase, domain 1"/>
    <property type="match status" value="1"/>
</dbReference>
<dbReference type="Gene3D" id="3.30.1700.10">
    <property type="entry name" value="lpxc deacetylase, domain 2"/>
    <property type="match status" value="1"/>
</dbReference>
<dbReference type="HAMAP" id="MF_00388">
    <property type="entry name" value="LpxC"/>
    <property type="match status" value="1"/>
</dbReference>
<dbReference type="InterPro" id="IPR020568">
    <property type="entry name" value="Ribosomal_Su5_D2-typ_SF"/>
</dbReference>
<dbReference type="InterPro" id="IPR004463">
    <property type="entry name" value="UDP-acyl_GlcNac_deAcase"/>
</dbReference>
<dbReference type="InterPro" id="IPR011334">
    <property type="entry name" value="UDP-acyl_GlcNac_deAcase_C"/>
</dbReference>
<dbReference type="InterPro" id="IPR015870">
    <property type="entry name" value="UDP-acyl_N-AcGlcN_deAcase_N"/>
</dbReference>
<dbReference type="NCBIfam" id="TIGR00325">
    <property type="entry name" value="lpxC"/>
    <property type="match status" value="1"/>
</dbReference>
<dbReference type="PANTHER" id="PTHR33694">
    <property type="entry name" value="UDP-3-O-ACYL-N-ACETYLGLUCOSAMINE DEACETYLASE 1, MITOCHONDRIAL-RELATED"/>
    <property type="match status" value="1"/>
</dbReference>
<dbReference type="PANTHER" id="PTHR33694:SF1">
    <property type="entry name" value="UDP-3-O-ACYL-N-ACETYLGLUCOSAMINE DEACETYLASE 1, MITOCHONDRIAL-RELATED"/>
    <property type="match status" value="1"/>
</dbReference>
<dbReference type="Pfam" id="PF03331">
    <property type="entry name" value="LpxC"/>
    <property type="match status" value="1"/>
</dbReference>
<dbReference type="SUPFAM" id="SSF54211">
    <property type="entry name" value="Ribosomal protein S5 domain 2-like"/>
    <property type="match status" value="2"/>
</dbReference>